<protein>
    <recommendedName>
        <fullName evidence="4">Extended FMRFamide-2</fullName>
        <shortName evidence="4">FMRFa-2</shortName>
    </recommendedName>
</protein>
<keyword id="KW-0027">Amidation</keyword>
<keyword id="KW-0903">Direct protein sequencing</keyword>
<keyword id="KW-0527">Neuropeptide</keyword>
<keyword id="KW-0964">Secreted</keyword>
<accession>B3A0A1</accession>
<feature type="peptide" id="PRO_0000421485" description="Extended FMRFamide-2" evidence="3">
    <location>
        <begin position="1"/>
        <end position="8"/>
    </location>
</feature>
<feature type="modified residue" description="Arginine amide" evidence="3">
    <location>
        <position position="8"/>
    </location>
</feature>
<feature type="unsure residue" description="L or I" evidence="3">
    <location>
        <position position="4"/>
    </location>
</feature>
<feature type="unsure residue" description="L or I" evidence="3">
    <location>
        <position position="6"/>
    </location>
</feature>
<name>FAR2_AUSRA</name>
<proteinExistence type="evidence at protein level"/>
<sequence>SDYLQLAR</sequence>
<comment type="function">
    <text evidence="1">FMRFamides and FMRFamide-like peptides are neuropeptides.</text>
</comment>
<comment type="subcellular location">
    <subcellularLocation>
        <location evidence="6">Secreted</location>
    </subcellularLocation>
</comment>
<comment type="similarity">
    <text evidence="2">Belongs to the FARP (FMRF amide related peptide) family.</text>
</comment>
<organism>
    <name type="scientific">Austrophasma rawsonvillense</name>
    <name type="common">Gladiator</name>
    <name type="synonym">Heel-walker</name>
    <dbReference type="NCBI Taxonomy" id="253137"/>
    <lineage>
        <taxon>Eukaryota</taxon>
        <taxon>Metazoa</taxon>
        <taxon>Ecdysozoa</taxon>
        <taxon>Arthropoda</taxon>
        <taxon>Hexapoda</taxon>
        <taxon>Insecta</taxon>
        <taxon>Pterygota</taxon>
        <taxon>Neoptera</taxon>
        <taxon>Polyneoptera</taxon>
        <taxon>Mantophasmatodea</taxon>
        <taxon>Austrophasmatidae</taxon>
        <taxon>Austrophasma</taxon>
    </lineage>
</organism>
<reference evidence="5" key="1">
    <citation type="journal article" date="2012" name="Syst. Biol.">
        <title>Peptidomics-based phylogeny and biogeography of Mantophasmatodea (Hexapoda).</title>
        <authorList>
            <person name="Predel R."/>
            <person name="Neupert S."/>
            <person name="Huetteroth W."/>
            <person name="Kahnt J."/>
            <person name="Waidelich D."/>
            <person name="Roth S."/>
        </authorList>
    </citation>
    <scope>PROTEIN SEQUENCE</scope>
    <scope>AMIDATION AT ARG-8</scope>
    <source>
        <tissue evidence="3">Thoracic perisympathetic organs</tissue>
    </source>
</reference>
<dbReference type="GO" id="GO:0005576">
    <property type="term" value="C:extracellular region"/>
    <property type="evidence" value="ECO:0007669"/>
    <property type="project" value="UniProtKB-SubCell"/>
</dbReference>
<dbReference type="GO" id="GO:0007218">
    <property type="term" value="P:neuropeptide signaling pathway"/>
    <property type="evidence" value="ECO:0007669"/>
    <property type="project" value="UniProtKB-KW"/>
</dbReference>
<evidence type="ECO:0000250" key="1">
    <source>
        <dbReference type="UniProtKB" id="P34405"/>
    </source>
</evidence>
<evidence type="ECO:0000255" key="2"/>
<evidence type="ECO:0000269" key="3">
    <source>
    </source>
</evidence>
<evidence type="ECO:0000303" key="4">
    <source>
    </source>
</evidence>
<evidence type="ECO:0000305" key="5"/>
<evidence type="ECO:0000305" key="6">
    <source>
    </source>
</evidence>